<name>SECY2_STREH</name>
<accession>F8LHW1</accession>
<gene>
    <name evidence="1" type="primary">secY2</name>
    <name type="ordered locus">SALIVB_0631</name>
</gene>
<evidence type="ECO:0000255" key="1">
    <source>
        <dbReference type="HAMAP-Rule" id="MF_01466"/>
    </source>
</evidence>
<sequence length="406" mass="45458">MKKILQSIVFKRLSWTVLFLFIYVLGSHLVLPFIDLKHPKLLGGLSNSIAFTSAMMGGNLSSFSLFSVGLSPWMSAMILWQMFSFSKKSGLSKLPIEIQDRRKMYLTFAIALIQSLAVSLSLPIEVGIPKGLAILTNTILLIAGTFFLVWLSDLNSFFGIGGSIVILMASMVANLPRQIGESITRLHIGLPIILSLIIMGLLFLYIAVIVQRARYRIPINKVNIHNRFSQYSYLDVMLTPAGGMPFMYAISLVSIPQYLLILIQILFPKNSWTNTWIEALTVGHPIWLVLYQVVLFVLGIAFAFVNVSGEQIAERMRKSGEYIYNVYPGPDTSRYINKVVMKFAVIGAIYTVIMAGGPMMIVLINPQYLQLSMIPGMFLIYSGMVYNVREEIAAMTLNESYKGLFD</sequence>
<reference key="1">
    <citation type="journal article" date="2011" name="J. Bacteriol.">
        <title>Complete genome sequence of the clinical Streptococcus salivarius strain CCHSS3.</title>
        <authorList>
            <person name="Delorme C."/>
            <person name="Guedon E."/>
            <person name="Pons N."/>
            <person name="Cruaud C."/>
            <person name="Couloux A."/>
            <person name="Loux V."/>
            <person name="Chiapello H."/>
            <person name="Poyart C."/>
            <person name="Gautier C."/>
            <person name="Sanchez N."/>
            <person name="Almeida M."/>
            <person name="Kennedy S.P."/>
            <person name="Ehrlich S.D."/>
            <person name="Gibrat J.F."/>
            <person name="Wincker P."/>
            <person name="Renault P."/>
        </authorList>
    </citation>
    <scope>NUCLEOTIDE SEQUENCE [LARGE SCALE GENOMIC DNA]</scope>
    <source>
        <strain>CCHSS3</strain>
    </source>
</reference>
<comment type="function">
    <text evidence="1">Part of the accessory SecA2/SecY2 system specifically required for export of possible cell wall proteins. The central subunit of a protein translocation channel.</text>
</comment>
<comment type="subunit">
    <text evidence="1">Component of the accessory SecA2/SecY2 protein translocase complex required to export cell wall proteins. May form heterotrimers with SecE and SecG subunits.</text>
</comment>
<comment type="subcellular location">
    <subcellularLocation>
        <location evidence="1">Cell membrane</location>
        <topology evidence="1">Multi-pass membrane protein</topology>
    </subcellularLocation>
</comment>
<comment type="similarity">
    <text evidence="1">Belongs to the SecY/SEC61-alpha family. SecY2 subfamily.</text>
</comment>
<dbReference type="EMBL" id="FR873481">
    <property type="protein sequence ID" value="CCB92931.1"/>
    <property type="molecule type" value="Genomic_DNA"/>
</dbReference>
<dbReference type="RefSeq" id="WP_013990275.1">
    <property type="nucleotide sequence ID" value="NC_015760.1"/>
</dbReference>
<dbReference type="SMR" id="F8LHW1"/>
<dbReference type="KEGG" id="ssr:SALIVB_0631"/>
<dbReference type="HOGENOM" id="CLU_030313_4_0_9"/>
<dbReference type="GO" id="GO:0005886">
    <property type="term" value="C:plasma membrane"/>
    <property type="evidence" value="ECO:0007669"/>
    <property type="project" value="UniProtKB-SubCell"/>
</dbReference>
<dbReference type="GO" id="GO:0065002">
    <property type="term" value="P:intracellular protein transmembrane transport"/>
    <property type="evidence" value="ECO:0007669"/>
    <property type="project" value="UniProtKB-UniRule"/>
</dbReference>
<dbReference type="GO" id="GO:0006605">
    <property type="term" value="P:protein targeting"/>
    <property type="evidence" value="ECO:0007669"/>
    <property type="project" value="UniProtKB-UniRule"/>
</dbReference>
<dbReference type="Gene3D" id="1.10.3370.10">
    <property type="entry name" value="SecY subunit domain"/>
    <property type="match status" value="1"/>
</dbReference>
<dbReference type="HAMAP" id="MF_01466">
    <property type="entry name" value="SecY2"/>
    <property type="match status" value="1"/>
</dbReference>
<dbReference type="InterPro" id="IPR002208">
    <property type="entry name" value="SecY/SEC61-alpha"/>
</dbReference>
<dbReference type="InterPro" id="IPR014269">
    <property type="entry name" value="SecY2"/>
</dbReference>
<dbReference type="InterPro" id="IPR023201">
    <property type="entry name" value="SecY_dom_sf"/>
</dbReference>
<dbReference type="NCBIfam" id="TIGR02920">
    <property type="entry name" value="acc_sec_Y2"/>
    <property type="match status" value="1"/>
</dbReference>
<dbReference type="NCBIfam" id="NF009082">
    <property type="entry name" value="PRK12417.1"/>
    <property type="match status" value="1"/>
</dbReference>
<dbReference type="PANTHER" id="PTHR10906">
    <property type="entry name" value="SECY/SEC61-ALPHA FAMILY MEMBER"/>
    <property type="match status" value="1"/>
</dbReference>
<dbReference type="Pfam" id="PF00344">
    <property type="entry name" value="SecY"/>
    <property type="match status" value="1"/>
</dbReference>
<dbReference type="PIRSF" id="PIRSF004557">
    <property type="entry name" value="SecY"/>
    <property type="match status" value="1"/>
</dbReference>
<dbReference type="PRINTS" id="PR00303">
    <property type="entry name" value="SECYTRNLCASE"/>
</dbReference>
<dbReference type="SUPFAM" id="SSF103491">
    <property type="entry name" value="Preprotein translocase SecY subunit"/>
    <property type="match status" value="1"/>
</dbReference>
<proteinExistence type="inferred from homology"/>
<organism>
    <name type="scientific">Streptococcus salivarius (strain CCHSS3)</name>
    <dbReference type="NCBI Taxonomy" id="1048332"/>
    <lineage>
        <taxon>Bacteria</taxon>
        <taxon>Bacillati</taxon>
        <taxon>Bacillota</taxon>
        <taxon>Bacilli</taxon>
        <taxon>Lactobacillales</taxon>
        <taxon>Streptococcaceae</taxon>
        <taxon>Streptococcus</taxon>
    </lineage>
</organism>
<keyword id="KW-1003">Cell membrane</keyword>
<keyword id="KW-0472">Membrane</keyword>
<keyword id="KW-0653">Protein transport</keyword>
<keyword id="KW-0811">Translocation</keyword>
<keyword id="KW-0812">Transmembrane</keyword>
<keyword id="KW-1133">Transmembrane helix</keyword>
<keyword id="KW-0813">Transport</keyword>
<protein>
    <recommendedName>
        <fullName evidence="1">Accessory Sec system protein translocase subunit SecY2</fullName>
    </recommendedName>
</protein>
<feature type="chain" id="PRO_0000414880" description="Accessory Sec system protein translocase subunit SecY2">
    <location>
        <begin position="1"/>
        <end position="406"/>
    </location>
</feature>
<feature type="transmembrane region" description="Helical" evidence="1">
    <location>
        <begin position="14"/>
        <end position="34"/>
    </location>
</feature>
<feature type="transmembrane region" description="Helical" evidence="1">
    <location>
        <begin position="63"/>
        <end position="83"/>
    </location>
</feature>
<feature type="transmembrane region" description="Helical" evidence="1">
    <location>
        <begin position="108"/>
        <end position="128"/>
    </location>
</feature>
<feature type="transmembrane region" description="Helical" evidence="1">
    <location>
        <begin position="131"/>
        <end position="151"/>
    </location>
</feature>
<feature type="transmembrane region" description="Helical" evidence="1">
    <location>
        <begin position="156"/>
        <end position="176"/>
    </location>
</feature>
<feature type="transmembrane region" description="Helical" evidence="1">
    <location>
        <begin position="190"/>
        <end position="210"/>
    </location>
</feature>
<feature type="transmembrane region" description="Helical" evidence="1">
    <location>
        <begin position="246"/>
        <end position="266"/>
    </location>
</feature>
<feature type="transmembrane region" description="Helical" evidence="1">
    <location>
        <begin position="285"/>
        <end position="305"/>
    </location>
</feature>
<feature type="transmembrane region" description="Helical" evidence="1">
    <location>
        <begin position="344"/>
        <end position="364"/>
    </location>
</feature>
<feature type="transmembrane region" description="Helical" evidence="1">
    <location>
        <begin position="368"/>
        <end position="388"/>
    </location>
</feature>